<accession>Q88DK5</accession>
<reference key="1">
    <citation type="journal article" date="2002" name="Environ. Microbiol.">
        <title>Complete genome sequence and comparative analysis of the metabolically versatile Pseudomonas putida KT2440.</title>
        <authorList>
            <person name="Nelson K.E."/>
            <person name="Weinel C."/>
            <person name="Paulsen I.T."/>
            <person name="Dodson R.J."/>
            <person name="Hilbert H."/>
            <person name="Martins dos Santos V.A.P."/>
            <person name="Fouts D.E."/>
            <person name="Gill S.R."/>
            <person name="Pop M."/>
            <person name="Holmes M."/>
            <person name="Brinkac L.M."/>
            <person name="Beanan M.J."/>
            <person name="DeBoy R.T."/>
            <person name="Daugherty S.C."/>
            <person name="Kolonay J.F."/>
            <person name="Madupu R."/>
            <person name="Nelson W.C."/>
            <person name="White O."/>
            <person name="Peterson J.D."/>
            <person name="Khouri H.M."/>
            <person name="Hance I."/>
            <person name="Chris Lee P."/>
            <person name="Holtzapple E.K."/>
            <person name="Scanlan D."/>
            <person name="Tran K."/>
            <person name="Moazzez A."/>
            <person name="Utterback T.R."/>
            <person name="Rizzo M."/>
            <person name="Lee K."/>
            <person name="Kosack D."/>
            <person name="Moestl D."/>
            <person name="Wedler H."/>
            <person name="Lauber J."/>
            <person name="Stjepandic D."/>
            <person name="Hoheisel J."/>
            <person name="Straetz M."/>
            <person name="Heim S."/>
            <person name="Kiewitz C."/>
            <person name="Eisen J.A."/>
            <person name="Timmis K.N."/>
            <person name="Duesterhoeft A."/>
            <person name="Tuemmler B."/>
            <person name="Fraser C.M."/>
        </authorList>
    </citation>
    <scope>NUCLEOTIDE SEQUENCE [LARGE SCALE GENOMIC DNA]</scope>
    <source>
        <strain>ATCC 47054 / DSM 6125 / CFBP 8728 / NCIMB 11950 / KT2440</strain>
    </source>
</reference>
<dbReference type="EC" id="1.3.1.-" evidence="1"/>
<dbReference type="EMBL" id="AE015451">
    <property type="protein sequence ID" value="AAN70389.1"/>
    <property type="molecule type" value="Genomic_DNA"/>
</dbReference>
<dbReference type="RefSeq" id="NP_746925.1">
    <property type="nucleotide sequence ID" value="NC_002947.4"/>
</dbReference>
<dbReference type="RefSeq" id="WP_010955431.1">
    <property type="nucleotide sequence ID" value="NZ_CP169744.1"/>
</dbReference>
<dbReference type="SMR" id="Q88DK5"/>
<dbReference type="STRING" id="160488.PP_4820"/>
<dbReference type="PaxDb" id="160488-PP_4820"/>
<dbReference type="GeneID" id="83682546"/>
<dbReference type="KEGG" id="ppu:PP_4820"/>
<dbReference type="PATRIC" id="fig|160488.4.peg.5143"/>
<dbReference type="eggNOG" id="COG0042">
    <property type="taxonomic scope" value="Bacteria"/>
</dbReference>
<dbReference type="HOGENOM" id="CLU_013299_0_1_6"/>
<dbReference type="OrthoDB" id="9764501at2"/>
<dbReference type="PhylomeDB" id="Q88DK5"/>
<dbReference type="BioCyc" id="PPUT160488:G1G01-5157-MONOMER"/>
<dbReference type="Proteomes" id="UP000000556">
    <property type="component" value="Chromosome"/>
</dbReference>
<dbReference type="GO" id="GO:0050660">
    <property type="term" value="F:flavin adenine dinucleotide binding"/>
    <property type="evidence" value="ECO:0007669"/>
    <property type="project" value="InterPro"/>
</dbReference>
<dbReference type="GO" id="GO:0010181">
    <property type="term" value="F:FMN binding"/>
    <property type="evidence" value="ECO:0007669"/>
    <property type="project" value="UniProtKB-UniRule"/>
</dbReference>
<dbReference type="GO" id="GO:0000049">
    <property type="term" value="F:tRNA binding"/>
    <property type="evidence" value="ECO:0007669"/>
    <property type="project" value="UniProtKB-UniRule"/>
</dbReference>
<dbReference type="GO" id="GO:0017150">
    <property type="term" value="F:tRNA dihydrouridine synthase activity"/>
    <property type="evidence" value="ECO:0007669"/>
    <property type="project" value="UniProtKB-UniRule"/>
</dbReference>
<dbReference type="CDD" id="cd02801">
    <property type="entry name" value="DUS_like_FMN"/>
    <property type="match status" value="1"/>
</dbReference>
<dbReference type="Gene3D" id="3.20.20.70">
    <property type="entry name" value="Aldolase class I"/>
    <property type="match status" value="1"/>
</dbReference>
<dbReference type="Gene3D" id="1.10.1200.80">
    <property type="entry name" value="Putative flavin oxidoreducatase, domain 2"/>
    <property type="match status" value="1"/>
</dbReference>
<dbReference type="HAMAP" id="MF_02042">
    <property type="entry name" value="DusB_subfam"/>
    <property type="match status" value="1"/>
</dbReference>
<dbReference type="InterPro" id="IPR013785">
    <property type="entry name" value="Aldolase_TIM"/>
</dbReference>
<dbReference type="InterPro" id="IPR035587">
    <property type="entry name" value="DUS-like_FMN-bd"/>
</dbReference>
<dbReference type="InterPro" id="IPR001269">
    <property type="entry name" value="DUS_fam"/>
</dbReference>
<dbReference type="InterPro" id="IPR032887">
    <property type="entry name" value="DusB"/>
</dbReference>
<dbReference type="InterPro" id="IPR004652">
    <property type="entry name" value="DusB-like"/>
</dbReference>
<dbReference type="InterPro" id="IPR024036">
    <property type="entry name" value="tRNA-dHydroUridine_Synthase_C"/>
</dbReference>
<dbReference type="InterPro" id="IPR018517">
    <property type="entry name" value="tRNA_hU_synthase_CS"/>
</dbReference>
<dbReference type="NCBIfam" id="TIGR00737">
    <property type="entry name" value="nifR3_yhdG"/>
    <property type="match status" value="1"/>
</dbReference>
<dbReference type="PANTHER" id="PTHR45846">
    <property type="entry name" value="TRNA-DIHYDROURIDINE(47) SYNTHASE [NAD(P)(+)]-LIKE"/>
    <property type="match status" value="1"/>
</dbReference>
<dbReference type="PANTHER" id="PTHR45846:SF1">
    <property type="entry name" value="TRNA-DIHYDROURIDINE(47) SYNTHASE [NAD(P)(+)]-LIKE"/>
    <property type="match status" value="1"/>
</dbReference>
<dbReference type="Pfam" id="PF01207">
    <property type="entry name" value="Dus"/>
    <property type="match status" value="1"/>
</dbReference>
<dbReference type="PIRSF" id="PIRSF006621">
    <property type="entry name" value="Dus"/>
    <property type="match status" value="1"/>
</dbReference>
<dbReference type="SUPFAM" id="SSF51395">
    <property type="entry name" value="FMN-linked oxidoreductases"/>
    <property type="match status" value="1"/>
</dbReference>
<dbReference type="PROSITE" id="PS01136">
    <property type="entry name" value="UPF0034"/>
    <property type="match status" value="1"/>
</dbReference>
<proteinExistence type="inferred from homology"/>
<feature type="chain" id="PRO_0000162094" description="tRNA-dihydrouridine synthase B">
    <location>
        <begin position="1"/>
        <end position="337"/>
    </location>
</feature>
<feature type="active site" description="Proton donor" evidence="1">
    <location>
        <position position="103"/>
    </location>
</feature>
<feature type="binding site" evidence="1">
    <location>
        <begin position="19"/>
        <end position="21"/>
    </location>
    <ligand>
        <name>FMN</name>
        <dbReference type="ChEBI" id="CHEBI:58210"/>
    </ligand>
</feature>
<feature type="binding site" evidence="1">
    <location>
        <position position="73"/>
    </location>
    <ligand>
        <name>FMN</name>
        <dbReference type="ChEBI" id="CHEBI:58210"/>
    </ligand>
</feature>
<feature type="binding site" evidence="1">
    <location>
        <position position="142"/>
    </location>
    <ligand>
        <name>FMN</name>
        <dbReference type="ChEBI" id="CHEBI:58210"/>
    </ligand>
</feature>
<feature type="binding site" evidence="1">
    <location>
        <begin position="203"/>
        <end position="205"/>
    </location>
    <ligand>
        <name>FMN</name>
        <dbReference type="ChEBI" id="CHEBI:58210"/>
    </ligand>
</feature>
<feature type="binding site" evidence="1">
    <location>
        <begin position="227"/>
        <end position="228"/>
    </location>
    <ligand>
        <name>FMN</name>
        <dbReference type="ChEBI" id="CHEBI:58210"/>
    </ligand>
</feature>
<keyword id="KW-0285">Flavoprotein</keyword>
<keyword id="KW-0288">FMN</keyword>
<keyword id="KW-0521">NADP</keyword>
<keyword id="KW-0560">Oxidoreductase</keyword>
<keyword id="KW-1185">Reference proteome</keyword>
<keyword id="KW-0694">RNA-binding</keyword>
<keyword id="KW-0819">tRNA processing</keyword>
<keyword id="KW-0820">tRNA-binding</keyword>
<organism>
    <name type="scientific">Pseudomonas putida (strain ATCC 47054 / DSM 6125 / CFBP 8728 / NCIMB 11950 / KT2440)</name>
    <dbReference type="NCBI Taxonomy" id="160488"/>
    <lineage>
        <taxon>Bacteria</taxon>
        <taxon>Pseudomonadati</taxon>
        <taxon>Pseudomonadota</taxon>
        <taxon>Gammaproteobacteria</taxon>
        <taxon>Pseudomonadales</taxon>
        <taxon>Pseudomonadaceae</taxon>
        <taxon>Pseudomonas</taxon>
    </lineage>
</organism>
<protein>
    <recommendedName>
        <fullName evidence="1">tRNA-dihydrouridine synthase B</fullName>
        <ecNumber evidence="1">1.3.1.-</ecNumber>
    </recommendedName>
</protein>
<gene>
    <name evidence="1" type="primary">dusB</name>
    <name type="ordered locus">PP_4820</name>
</gene>
<comment type="function">
    <text evidence="1">Catalyzes the synthesis of 5,6-dihydrouridine (D), a modified base found in the D-loop of most tRNAs, via the reduction of the C5-C6 double bond in target uridines.</text>
</comment>
<comment type="catalytic activity">
    <reaction evidence="1">
        <text>a 5,6-dihydrouridine in tRNA + NAD(+) = a uridine in tRNA + NADH + H(+)</text>
        <dbReference type="Rhea" id="RHEA:54452"/>
        <dbReference type="Rhea" id="RHEA-COMP:13339"/>
        <dbReference type="Rhea" id="RHEA-COMP:13887"/>
        <dbReference type="ChEBI" id="CHEBI:15378"/>
        <dbReference type="ChEBI" id="CHEBI:57540"/>
        <dbReference type="ChEBI" id="CHEBI:57945"/>
        <dbReference type="ChEBI" id="CHEBI:65315"/>
        <dbReference type="ChEBI" id="CHEBI:74443"/>
    </reaction>
</comment>
<comment type="catalytic activity">
    <reaction evidence="1">
        <text>a 5,6-dihydrouridine in tRNA + NADP(+) = a uridine in tRNA + NADPH + H(+)</text>
        <dbReference type="Rhea" id="RHEA:23624"/>
        <dbReference type="Rhea" id="RHEA-COMP:13339"/>
        <dbReference type="Rhea" id="RHEA-COMP:13887"/>
        <dbReference type="ChEBI" id="CHEBI:15378"/>
        <dbReference type="ChEBI" id="CHEBI:57783"/>
        <dbReference type="ChEBI" id="CHEBI:58349"/>
        <dbReference type="ChEBI" id="CHEBI:65315"/>
        <dbReference type="ChEBI" id="CHEBI:74443"/>
    </reaction>
</comment>
<comment type="cofactor">
    <cofactor evidence="1">
        <name>FMN</name>
        <dbReference type="ChEBI" id="CHEBI:58210"/>
    </cofactor>
</comment>
<comment type="similarity">
    <text evidence="1">Belongs to the Dus family. DusB subfamily.</text>
</comment>
<evidence type="ECO:0000255" key="1">
    <source>
        <dbReference type="HAMAP-Rule" id="MF_02042"/>
    </source>
</evidence>
<sequence>MSAVRIGQYTLRNNLILAPMAGVTDQPFRTLCQRLGAGMVVSEMVSSDMSLWNSRKSSLRRIHEGDPEPRSVQIAGGDAQMMAAAAKANVEAGAQIIDINMGCPAKKVCNKAAGSALLRDEALVSEILHAVVSAVDVPVTLKIRTGWDRANKNGLNVAKIAEQAGIQALAVHGRTRADLYTGEAEYDTIGAIKQAVSIPVFANGDITSPEKARAVLETTGVDGLLIGRAAQGRPWIFREIEHYLRTGEHLPAPQLDEVERILLEHLAALHAFYGDVMGVRIARKHVGWYLATRPGGKEFRARFNALEDTQAQCANVRAFFSERRQSLETEDGQGVAA</sequence>
<name>DUSB_PSEPK</name>